<evidence type="ECO:0000250" key="1"/>
<evidence type="ECO:0000255" key="2"/>
<evidence type="ECO:0000255" key="3">
    <source>
        <dbReference type="PROSITE-ProRule" id="PRU00108"/>
    </source>
</evidence>
<evidence type="ECO:0000255" key="4">
    <source>
        <dbReference type="PROSITE-ProRule" id="PRU00197"/>
    </source>
</evidence>
<evidence type="ECO:0000256" key="5">
    <source>
        <dbReference type="SAM" id="MobiDB-lite"/>
    </source>
</evidence>
<evidence type="ECO:0000269" key="6">
    <source>
    </source>
</evidence>
<evidence type="ECO:0000305" key="7"/>
<evidence type="ECO:0000312" key="8">
    <source>
        <dbReference type="EMBL" id="EEE53599.1"/>
    </source>
</evidence>
<name>HOX33_ORYSJ</name>
<sequence>MAAAAVGGRGERLSSSSPTAAAPQVDAGKYVRYTPEQVEALERVYTECPKPSSLRRQQLIRECPILSNIEPKQIKVWFQNRRCREKQRKEASRLQTVNRKLNAMNKLLMEENDRLQKQVSRLVYENGYMRTQLHNPSAATTDTSCESVVTSGQHHQQQNPAVLHPQRDANNPAGLLAIAEETLAEFMSKATGTAVEWVQMVGMKPGPDSIGIIAVSHNCSGVAARACGLVSLEPTKVAEILKDRPSWYRDCRCVDIIHVIPTGNGGTIELIYMQTYAPTTLAAPRDFWTLRYTSGLEDGSLVICERSLTQSTGGPSGPNTPNFIRAEVLPSGYLIRPCEGGGSMIYIVDHVDLDAWSVPEVLRPLYESPKILAQKMTIAALRHIRQIAHESSGEIPYGAGRQPAVFRTFSQRLSRGFNDAVSGFPDDGWSLLSSDGSEDITISVNSSPNKLVGSHVSPNPLFSTVGGGILCAKASMLLQNVPPALLVRFLREHRSEWADPGVDAYSAASLRASPYAVPGLRTSGFMGSQVILPLAHTLEHEEFLEVIRLEGHGFSHDEVLLSRDMYLLQLCSGVDENATSASAQLVFAPIDESFADDAPLLPSGFRVIPLDTKMDGPSATRTLDLASALEVGPGGASRASVEASGTCNRSVLTIAFQFSYENHLRESVAAMARSYVRAVMASVQRVAVAIAPSRLGPQIGMKHPPASPEALTLASWIGRSYRAHTGADIRWSDTEDADSPLALLWKHSDAILCCSLKPAPMFTFANNAGLDILETTLVNLQDISLEMILDDEGRKALCSEFPKIMQQGFTYLPGGVCKSSMGRQASYEQAVAWKVLSDDDAPHCLAFMLVNWTFM</sequence>
<feature type="chain" id="PRO_0000331734" description="Homeobox-leucine zipper protein HOX33">
    <location>
        <begin position="1"/>
        <end position="855"/>
    </location>
</feature>
<feature type="domain" description="START" evidence="4">
    <location>
        <begin position="168"/>
        <end position="390"/>
    </location>
</feature>
<feature type="DNA-binding region" description="Homeobox" evidence="3">
    <location>
        <begin position="26"/>
        <end position="89"/>
    </location>
</feature>
<feature type="region of interest" description="Disordered" evidence="5">
    <location>
        <begin position="1"/>
        <end position="21"/>
    </location>
</feature>
<feature type="coiled-coil region" evidence="2">
    <location>
        <begin position="84"/>
        <end position="126"/>
    </location>
</feature>
<feature type="sequence conflict" description="In Ref. 6; AK102183." evidence="7" ref="6">
    <original>A</original>
    <variation>T</variation>
    <location>
        <position position="214"/>
    </location>
</feature>
<feature type="sequence conflict" description="In Ref. 6; AK102183." evidence="7" ref="6">
    <original>Y</original>
    <variation>H</variation>
    <location>
        <position position="276"/>
    </location>
</feature>
<feature type="sequence conflict" description="In Ref. 6; AK102183." evidence="7" ref="6">
    <original>P</original>
    <variation>L</variation>
    <location>
        <position position="321"/>
    </location>
</feature>
<proteinExistence type="evidence at transcript level"/>
<keyword id="KW-0175">Coiled coil</keyword>
<keyword id="KW-0238">DNA-binding</keyword>
<keyword id="KW-0371">Homeobox</keyword>
<keyword id="KW-0539">Nucleus</keyword>
<keyword id="KW-1185">Reference proteome</keyword>
<keyword id="KW-0804">Transcription</keyword>
<keyword id="KW-0805">Transcription regulation</keyword>
<reference key="1">
    <citation type="journal article" date="2005" name="BMC Biol.">
        <title>The sequence of rice chromosomes 11 and 12, rich in disease resistance genes and recent gene duplications.</title>
        <authorList>
            <consortium name="The rice chromosomes 11 and 12 sequencing consortia"/>
        </authorList>
    </citation>
    <scope>NUCLEOTIDE SEQUENCE [LARGE SCALE GENOMIC DNA]</scope>
    <source>
        <strain>cv. Nipponbare</strain>
    </source>
</reference>
<reference key="2">
    <citation type="journal article" date="2005" name="Nature">
        <title>The map-based sequence of the rice genome.</title>
        <authorList>
            <consortium name="International rice genome sequencing project (IRGSP)"/>
        </authorList>
    </citation>
    <scope>NUCLEOTIDE SEQUENCE [LARGE SCALE GENOMIC DNA]</scope>
    <source>
        <strain>cv. Nipponbare</strain>
    </source>
</reference>
<reference key="3">
    <citation type="journal article" date="2008" name="Nucleic Acids Res.">
        <title>The rice annotation project database (RAP-DB): 2008 update.</title>
        <authorList>
            <consortium name="The rice annotation project (RAP)"/>
        </authorList>
    </citation>
    <scope>GENOME REANNOTATION</scope>
    <source>
        <strain>cv. Nipponbare</strain>
    </source>
</reference>
<reference key="4">
    <citation type="journal article" date="2013" name="Rice">
        <title>Improvement of the Oryza sativa Nipponbare reference genome using next generation sequence and optical map data.</title>
        <authorList>
            <person name="Kawahara Y."/>
            <person name="de la Bastide M."/>
            <person name="Hamilton J.P."/>
            <person name="Kanamori H."/>
            <person name="McCombie W.R."/>
            <person name="Ouyang S."/>
            <person name="Schwartz D.C."/>
            <person name="Tanaka T."/>
            <person name="Wu J."/>
            <person name="Zhou S."/>
            <person name="Childs K.L."/>
            <person name="Davidson R.M."/>
            <person name="Lin H."/>
            <person name="Quesada-Ocampo L."/>
            <person name="Vaillancourt B."/>
            <person name="Sakai H."/>
            <person name="Lee S.S."/>
            <person name="Kim J."/>
            <person name="Numa H."/>
            <person name="Itoh T."/>
            <person name="Buell C.R."/>
            <person name="Matsumoto T."/>
        </authorList>
    </citation>
    <scope>GENOME REANNOTATION</scope>
    <source>
        <strain>cv. Nipponbare</strain>
    </source>
</reference>
<reference key="5">
    <citation type="journal article" date="2005" name="PLoS Biol.">
        <title>The genomes of Oryza sativa: a history of duplications.</title>
        <authorList>
            <person name="Yu J."/>
            <person name="Wang J."/>
            <person name="Lin W."/>
            <person name="Li S."/>
            <person name="Li H."/>
            <person name="Zhou J."/>
            <person name="Ni P."/>
            <person name="Dong W."/>
            <person name="Hu S."/>
            <person name="Zeng C."/>
            <person name="Zhang J."/>
            <person name="Zhang Y."/>
            <person name="Li R."/>
            <person name="Xu Z."/>
            <person name="Li S."/>
            <person name="Li X."/>
            <person name="Zheng H."/>
            <person name="Cong L."/>
            <person name="Lin L."/>
            <person name="Yin J."/>
            <person name="Geng J."/>
            <person name="Li G."/>
            <person name="Shi J."/>
            <person name="Liu J."/>
            <person name="Lv H."/>
            <person name="Li J."/>
            <person name="Wang J."/>
            <person name="Deng Y."/>
            <person name="Ran L."/>
            <person name="Shi X."/>
            <person name="Wang X."/>
            <person name="Wu Q."/>
            <person name="Li C."/>
            <person name="Ren X."/>
            <person name="Wang J."/>
            <person name="Wang X."/>
            <person name="Li D."/>
            <person name="Liu D."/>
            <person name="Zhang X."/>
            <person name="Ji Z."/>
            <person name="Zhao W."/>
            <person name="Sun Y."/>
            <person name="Zhang Z."/>
            <person name="Bao J."/>
            <person name="Han Y."/>
            <person name="Dong L."/>
            <person name="Ji J."/>
            <person name="Chen P."/>
            <person name="Wu S."/>
            <person name="Liu J."/>
            <person name="Xiao Y."/>
            <person name="Bu D."/>
            <person name="Tan J."/>
            <person name="Yang L."/>
            <person name="Ye C."/>
            <person name="Zhang J."/>
            <person name="Xu J."/>
            <person name="Zhou Y."/>
            <person name="Yu Y."/>
            <person name="Zhang B."/>
            <person name="Zhuang S."/>
            <person name="Wei H."/>
            <person name="Liu B."/>
            <person name="Lei M."/>
            <person name="Yu H."/>
            <person name="Li Y."/>
            <person name="Xu H."/>
            <person name="Wei S."/>
            <person name="He X."/>
            <person name="Fang L."/>
            <person name="Zhang Z."/>
            <person name="Zhang Y."/>
            <person name="Huang X."/>
            <person name="Su Z."/>
            <person name="Tong W."/>
            <person name="Li J."/>
            <person name="Tong Z."/>
            <person name="Li S."/>
            <person name="Ye J."/>
            <person name="Wang L."/>
            <person name="Fang L."/>
            <person name="Lei T."/>
            <person name="Chen C.-S."/>
            <person name="Chen H.-C."/>
            <person name="Xu Z."/>
            <person name="Li H."/>
            <person name="Huang H."/>
            <person name="Zhang F."/>
            <person name="Xu H."/>
            <person name="Li N."/>
            <person name="Zhao C."/>
            <person name="Li S."/>
            <person name="Dong L."/>
            <person name="Huang Y."/>
            <person name="Li L."/>
            <person name="Xi Y."/>
            <person name="Qi Q."/>
            <person name="Li W."/>
            <person name="Zhang B."/>
            <person name="Hu W."/>
            <person name="Zhang Y."/>
            <person name="Tian X."/>
            <person name="Jiao Y."/>
            <person name="Liang X."/>
            <person name="Jin J."/>
            <person name="Gao L."/>
            <person name="Zheng W."/>
            <person name="Hao B."/>
            <person name="Liu S.-M."/>
            <person name="Wang W."/>
            <person name="Yuan L."/>
            <person name="Cao M."/>
            <person name="McDermott J."/>
            <person name="Samudrala R."/>
            <person name="Wang J."/>
            <person name="Wong G.K.-S."/>
            <person name="Yang H."/>
        </authorList>
    </citation>
    <scope>NUCLEOTIDE SEQUENCE [LARGE SCALE GENOMIC DNA]</scope>
    <source>
        <strain>cv. Nipponbare</strain>
    </source>
</reference>
<reference key="6">
    <citation type="journal article" date="2003" name="Science">
        <title>Collection, mapping, and annotation of over 28,000 cDNA clones from japonica rice.</title>
        <authorList>
            <consortium name="The rice full-length cDNA consortium"/>
        </authorList>
    </citation>
    <scope>NUCLEOTIDE SEQUENCE [LARGE SCALE MRNA]</scope>
    <source>
        <strain>cv. Nipponbare</strain>
    </source>
</reference>
<reference key="7">
    <citation type="journal article" date="2008" name="Plant Mol. Biol.">
        <title>A genome-wide survey of HD-Zip genes in rice and analysis of drought-responsive family members.</title>
        <authorList>
            <person name="Agalou A."/>
            <person name="Purwantomo S."/>
            <person name="Oevernaes E."/>
            <person name="Johannesson H."/>
            <person name="Zhu X."/>
            <person name="Estiati A."/>
            <person name="de Kam R.J."/>
            <person name="Engstroem P."/>
            <person name="Slamet-Loedin I.H."/>
            <person name="Zhu Z."/>
            <person name="Wang M."/>
            <person name="Xiong L."/>
            <person name="Meijer A.H."/>
            <person name="Ouwerkerk P.B.F."/>
        </authorList>
    </citation>
    <scope>TISSUE SPECIFICITY</scope>
    <scope>GENE FAMILY</scope>
    <scope>NOMENCLATURE</scope>
</reference>
<dbReference type="EMBL" id="DP000011">
    <property type="protein sequence ID" value="ABA99386.1"/>
    <property type="molecule type" value="Genomic_DNA"/>
</dbReference>
<dbReference type="EMBL" id="AP008218">
    <property type="protein sequence ID" value="BAF30279.1"/>
    <property type="molecule type" value="Genomic_DNA"/>
</dbReference>
<dbReference type="EMBL" id="AP014968">
    <property type="protein sequence ID" value="BAT18052.1"/>
    <property type="molecule type" value="Genomic_DNA"/>
</dbReference>
<dbReference type="EMBL" id="CM000149">
    <property type="protein sequence ID" value="EEE53599.1"/>
    <property type="molecule type" value="Genomic_DNA"/>
</dbReference>
<dbReference type="EMBL" id="AK102183">
    <property type="status" value="NOT_ANNOTATED_CDS"/>
    <property type="molecule type" value="mRNA"/>
</dbReference>
<dbReference type="RefSeq" id="XP_015620816.1">
    <property type="nucleotide sequence ID" value="XM_015765330.1"/>
</dbReference>
<dbReference type="SMR" id="Q2QM96"/>
<dbReference type="FunCoup" id="Q2QM96">
    <property type="interactions" value="989"/>
</dbReference>
<dbReference type="STRING" id="39947.Q2QM96"/>
<dbReference type="PaxDb" id="39947-Q2QM96"/>
<dbReference type="EnsemblPlants" id="Os12t0612700-01">
    <property type="protein sequence ID" value="Os12t0612700-01"/>
    <property type="gene ID" value="Os12g0612700"/>
</dbReference>
<dbReference type="Gramene" id="Os12t0612700-01">
    <property type="protein sequence ID" value="Os12t0612700-01"/>
    <property type="gene ID" value="Os12g0612700"/>
</dbReference>
<dbReference type="KEGG" id="dosa:Os12g0612700"/>
<dbReference type="eggNOG" id="ENOG502QPKR">
    <property type="taxonomic scope" value="Eukaryota"/>
</dbReference>
<dbReference type="HOGENOM" id="CLU_012517_0_0_1"/>
<dbReference type="InParanoid" id="Q2QM96"/>
<dbReference type="OMA" id="KHRIHTA"/>
<dbReference type="OrthoDB" id="125004at2759"/>
<dbReference type="Proteomes" id="UP000000763">
    <property type="component" value="Chromosome 12"/>
</dbReference>
<dbReference type="Proteomes" id="UP000007752">
    <property type="component" value="Chromosome 12"/>
</dbReference>
<dbReference type="Proteomes" id="UP000059680">
    <property type="component" value="Chromosome 12"/>
</dbReference>
<dbReference type="GO" id="GO:0005634">
    <property type="term" value="C:nucleus"/>
    <property type="evidence" value="ECO:0007669"/>
    <property type="project" value="UniProtKB-SubCell"/>
</dbReference>
<dbReference type="GO" id="GO:0003677">
    <property type="term" value="F:DNA binding"/>
    <property type="evidence" value="ECO:0007669"/>
    <property type="project" value="UniProtKB-KW"/>
</dbReference>
<dbReference type="GO" id="GO:0003700">
    <property type="term" value="F:DNA-binding transcription factor activity"/>
    <property type="evidence" value="ECO:0007669"/>
    <property type="project" value="InterPro"/>
</dbReference>
<dbReference type="GO" id="GO:0008289">
    <property type="term" value="F:lipid binding"/>
    <property type="evidence" value="ECO:0007669"/>
    <property type="project" value="InterPro"/>
</dbReference>
<dbReference type="CDD" id="cd14686">
    <property type="entry name" value="bZIP"/>
    <property type="match status" value="1"/>
</dbReference>
<dbReference type="CDD" id="cd00086">
    <property type="entry name" value="homeodomain"/>
    <property type="match status" value="1"/>
</dbReference>
<dbReference type="CDD" id="cd08875">
    <property type="entry name" value="START_ArGLABRA2_like"/>
    <property type="match status" value="1"/>
</dbReference>
<dbReference type="FunFam" id="1.10.10.60:FF:000197">
    <property type="entry name" value="Homeobox-leucine zipper protein REVOLUTA"/>
    <property type="match status" value="1"/>
</dbReference>
<dbReference type="Gene3D" id="3.30.530.20">
    <property type="match status" value="1"/>
</dbReference>
<dbReference type="Gene3D" id="1.10.10.60">
    <property type="entry name" value="Homeodomain-like"/>
    <property type="match status" value="1"/>
</dbReference>
<dbReference type="InterPro" id="IPR001356">
    <property type="entry name" value="HD"/>
</dbReference>
<dbReference type="InterPro" id="IPR044830">
    <property type="entry name" value="HD-Zip_III"/>
</dbReference>
<dbReference type="InterPro" id="IPR009057">
    <property type="entry name" value="Homeodomain-like_sf"/>
</dbReference>
<dbReference type="InterPro" id="IPR013978">
    <property type="entry name" value="MEKHLA"/>
</dbReference>
<dbReference type="InterPro" id="IPR023393">
    <property type="entry name" value="START-like_dom_sf"/>
</dbReference>
<dbReference type="InterPro" id="IPR002913">
    <property type="entry name" value="START_lipid-bd_dom"/>
</dbReference>
<dbReference type="PANTHER" id="PTHR45950">
    <property type="entry name" value="HOMEOBOX-LEUCINE ZIPPER PROTEIN ATHB-14"/>
    <property type="match status" value="1"/>
</dbReference>
<dbReference type="PANTHER" id="PTHR45950:SF3">
    <property type="entry name" value="HOMEOBOX-LEUCINE ZIPPER PROTEIN HOX33"/>
    <property type="match status" value="1"/>
</dbReference>
<dbReference type="Pfam" id="PF00046">
    <property type="entry name" value="Homeodomain"/>
    <property type="match status" value="1"/>
</dbReference>
<dbReference type="Pfam" id="PF08670">
    <property type="entry name" value="MEKHLA"/>
    <property type="match status" value="1"/>
</dbReference>
<dbReference type="Pfam" id="PF01852">
    <property type="entry name" value="START"/>
    <property type="match status" value="1"/>
</dbReference>
<dbReference type="SMART" id="SM00389">
    <property type="entry name" value="HOX"/>
    <property type="match status" value="1"/>
</dbReference>
<dbReference type="SMART" id="SM00234">
    <property type="entry name" value="START"/>
    <property type="match status" value="1"/>
</dbReference>
<dbReference type="SUPFAM" id="SSF55961">
    <property type="entry name" value="Bet v1-like"/>
    <property type="match status" value="2"/>
</dbReference>
<dbReference type="SUPFAM" id="SSF46689">
    <property type="entry name" value="Homeodomain-like"/>
    <property type="match status" value="1"/>
</dbReference>
<dbReference type="PROSITE" id="PS50071">
    <property type="entry name" value="HOMEOBOX_2"/>
    <property type="match status" value="1"/>
</dbReference>
<dbReference type="PROSITE" id="PS50848">
    <property type="entry name" value="START"/>
    <property type="match status" value="1"/>
</dbReference>
<comment type="function">
    <text evidence="1">Probable transcription factor.</text>
</comment>
<comment type="subcellular location">
    <subcellularLocation>
        <location evidence="7">Nucleus</location>
    </subcellularLocation>
</comment>
<comment type="tissue specificity">
    <text evidence="6">Expressed in seedlings, roots, stems, leaf sheaths and blades and panicles.</text>
</comment>
<comment type="similarity">
    <text evidence="7">Belongs to the HD-ZIP homeobox family. Class III subfamily.</text>
</comment>
<gene>
    <name type="primary">HOX33</name>
    <name type="ordered locus">Os12g0612700</name>
    <name type="ordered locus">LOC_Os12g41860</name>
    <name evidence="8" type="ORF">OsJ_36852</name>
</gene>
<organism>
    <name type="scientific">Oryza sativa subsp. japonica</name>
    <name type="common">Rice</name>
    <dbReference type="NCBI Taxonomy" id="39947"/>
    <lineage>
        <taxon>Eukaryota</taxon>
        <taxon>Viridiplantae</taxon>
        <taxon>Streptophyta</taxon>
        <taxon>Embryophyta</taxon>
        <taxon>Tracheophyta</taxon>
        <taxon>Spermatophyta</taxon>
        <taxon>Magnoliopsida</taxon>
        <taxon>Liliopsida</taxon>
        <taxon>Poales</taxon>
        <taxon>Poaceae</taxon>
        <taxon>BOP clade</taxon>
        <taxon>Oryzoideae</taxon>
        <taxon>Oryzeae</taxon>
        <taxon>Oryzinae</taxon>
        <taxon>Oryza</taxon>
        <taxon>Oryza sativa</taxon>
    </lineage>
</organism>
<accession>Q2QM96</accession>
<accession>B9GE92</accession>
<protein>
    <recommendedName>
        <fullName>Homeobox-leucine zipper protein HOX33</fullName>
    </recommendedName>
    <alternativeName>
        <fullName>HD-ZIP protein HOX33</fullName>
    </alternativeName>
    <alternativeName>
        <fullName>Homeodomain transcription factor HOX33</fullName>
    </alternativeName>
    <alternativeName>
        <fullName>OsHox33</fullName>
    </alternativeName>
</protein>